<dbReference type="EMBL" id="AE017180">
    <property type="protein sequence ID" value="AAR36232.1"/>
    <property type="molecule type" value="Genomic_DNA"/>
</dbReference>
<dbReference type="RefSeq" id="NP_953882.1">
    <property type="nucleotide sequence ID" value="NC_002939.5"/>
</dbReference>
<dbReference type="RefSeq" id="WP_010943468.1">
    <property type="nucleotide sequence ID" value="NC_002939.5"/>
</dbReference>
<dbReference type="SMR" id="Q749A5"/>
<dbReference type="FunCoup" id="Q749A5">
    <property type="interactions" value="423"/>
</dbReference>
<dbReference type="STRING" id="243231.GSU2839"/>
<dbReference type="EnsemblBacteria" id="AAR36232">
    <property type="protein sequence ID" value="AAR36232"/>
    <property type="gene ID" value="GSU2839"/>
</dbReference>
<dbReference type="KEGG" id="gsu:GSU2839"/>
<dbReference type="PATRIC" id="fig|243231.5.peg.2865"/>
<dbReference type="eggNOG" id="COG1841">
    <property type="taxonomic scope" value="Bacteria"/>
</dbReference>
<dbReference type="HOGENOM" id="CLU_131047_2_1_7"/>
<dbReference type="InParanoid" id="Q749A5"/>
<dbReference type="OrthoDB" id="9812790at2"/>
<dbReference type="Proteomes" id="UP000000577">
    <property type="component" value="Chromosome"/>
</dbReference>
<dbReference type="GO" id="GO:0022625">
    <property type="term" value="C:cytosolic large ribosomal subunit"/>
    <property type="evidence" value="ECO:0000318"/>
    <property type="project" value="GO_Central"/>
</dbReference>
<dbReference type="GO" id="GO:0003735">
    <property type="term" value="F:structural constituent of ribosome"/>
    <property type="evidence" value="ECO:0007669"/>
    <property type="project" value="InterPro"/>
</dbReference>
<dbReference type="GO" id="GO:0006412">
    <property type="term" value="P:translation"/>
    <property type="evidence" value="ECO:0007669"/>
    <property type="project" value="InterPro"/>
</dbReference>
<dbReference type="CDD" id="cd01658">
    <property type="entry name" value="Ribosomal_L30"/>
    <property type="match status" value="1"/>
</dbReference>
<dbReference type="FunFam" id="3.30.1390.20:FF:000001">
    <property type="entry name" value="50S ribosomal protein L30"/>
    <property type="match status" value="1"/>
</dbReference>
<dbReference type="Gene3D" id="3.30.1390.20">
    <property type="entry name" value="Ribosomal protein L30, ferredoxin-like fold domain"/>
    <property type="match status" value="1"/>
</dbReference>
<dbReference type="HAMAP" id="MF_01371_B">
    <property type="entry name" value="Ribosomal_uL30_B"/>
    <property type="match status" value="1"/>
</dbReference>
<dbReference type="InterPro" id="IPR036919">
    <property type="entry name" value="Ribo_uL30_ferredoxin-like_sf"/>
</dbReference>
<dbReference type="InterPro" id="IPR005996">
    <property type="entry name" value="Ribosomal_uL30_bac-type"/>
</dbReference>
<dbReference type="InterPro" id="IPR016082">
    <property type="entry name" value="Ribosomal_uL30_ferredoxin-like"/>
</dbReference>
<dbReference type="NCBIfam" id="TIGR01308">
    <property type="entry name" value="rpmD_bact"/>
    <property type="match status" value="1"/>
</dbReference>
<dbReference type="PANTHER" id="PTHR15892:SF2">
    <property type="entry name" value="LARGE RIBOSOMAL SUBUNIT PROTEIN UL30M"/>
    <property type="match status" value="1"/>
</dbReference>
<dbReference type="PANTHER" id="PTHR15892">
    <property type="entry name" value="MITOCHONDRIAL RIBOSOMAL PROTEIN L30"/>
    <property type="match status" value="1"/>
</dbReference>
<dbReference type="Pfam" id="PF00327">
    <property type="entry name" value="Ribosomal_L30"/>
    <property type="match status" value="1"/>
</dbReference>
<dbReference type="PIRSF" id="PIRSF002211">
    <property type="entry name" value="Ribosomal_L30_bac-type"/>
    <property type="match status" value="1"/>
</dbReference>
<dbReference type="SUPFAM" id="SSF55129">
    <property type="entry name" value="Ribosomal protein L30p/L7e"/>
    <property type="match status" value="1"/>
</dbReference>
<protein>
    <recommendedName>
        <fullName evidence="1">Large ribosomal subunit protein uL30</fullName>
    </recommendedName>
    <alternativeName>
        <fullName evidence="2">50S ribosomal protein L30</fullName>
    </alternativeName>
</protein>
<keyword id="KW-1185">Reference proteome</keyword>
<keyword id="KW-0687">Ribonucleoprotein</keyword>
<keyword id="KW-0689">Ribosomal protein</keyword>
<proteinExistence type="inferred from homology"/>
<evidence type="ECO:0000255" key="1">
    <source>
        <dbReference type="HAMAP-Rule" id="MF_01371"/>
    </source>
</evidence>
<evidence type="ECO:0000305" key="2"/>
<accession>Q749A5</accession>
<feature type="chain" id="PRO_1000056045" description="Large ribosomal subunit protein uL30">
    <location>
        <begin position="1"/>
        <end position="59"/>
    </location>
</feature>
<reference key="1">
    <citation type="journal article" date="2003" name="Science">
        <title>Genome of Geobacter sulfurreducens: metal reduction in subsurface environments.</title>
        <authorList>
            <person name="Methe B.A."/>
            <person name="Nelson K.E."/>
            <person name="Eisen J.A."/>
            <person name="Paulsen I.T."/>
            <person name="Nelson W.C."/>
            <person name="Heidelberg J.F."/>
            <person name="Wu D."/>
            <person name="Wu M."/>
            <person name="Ward N.L."/>
            <person name="Beanan M.J."/>
            <person name="Dodson R.J."/>
            <person name="Madupu R."/>
            <person name="Brinkac L.M."/>
            <person name="Daugherty S.C."/>
            <person name="DeBoy R.T."/>
            <person name="Durkin A.S."/>
            <person name="Gwinn M.L."/>
            <person name="Kolonay J.F."/>
            <person name="Sullivan S.A."/>
            <person name="Haft D.H."/>
            <person name="Selengut J."/>
            <person name="Davidsen T.M."/>
            <person name="Zafar N."/>
            <person name="White O."/>
            <person name="Tran B."/>
            <person name="Romero C."/>
            <person name="Forberger H.A."/>
            <person name="Weidman J.F."/>
            <person name="Khouri H.M."/>
            <person name="Feldblyum T.V."/>
            <person name="Utterback T.R."/>
            <person name="Van Aken S.E."/>
            <person name="Lovley D.R."/>
            <person name="Fraser C.M."/>
        </authorList>
    </citation>
    <scope>NUCLEOTIDE SEQUENCE [LARGE SCALE GENOMIC DNA]</scope>
    <source>
        <strain>ATCC 51573 / DSM 12127 / PCA</strain>
    </source>
</reference>
<gene>
    <name evidence="1" type="primary">rpmD</name>
    <name type="ordered locus">GSU2839</name>
</gene>
<comment type="subunit">
    <text evidence="1">Part of the 50S ribosomal subunit.</text>
</comment>
<comment type="similarity">
    <text evidence="1">Belongs to the universal ribosomal protein uL30 family.</text>
</comment>
<name>RL30_GEOSL</name>
<organism>
    <name type="scientific">Geobacter sulfurreducens (strain ATCC 51573 / DSM 12127 / PCA)</name>
    <dbReference type="NCBI Taxonomy" id="243231"/>
    <lineage>
        <taxon>Bacteria</taxon>
        <taxon>Pseudomonadati</taxon>
        <taxon>Thermodesulfobacteriota</taxon>
        <taxon>Desulfuromonadia</taxon>
        <taxon>Geobacterales</taxon>
        <taxon>Geobacteraceae</taxon>
        <taxon>Geobacter</taxon>
    </lineage>
</organism>
<sequence>MSAELKITLVRSHIGTTSKQRAVLNGLGLTKVNKTVVLKNTPEIVGMVQKVAHMVKVVE</sequence>